<protein>
    <recommendedName>
        <fullName evidence="1">Large ribosomal subunit protein uL18</fullName>
    </recommendedName>
    <alternativeName>
        <fullName evidence="2">50S ribosomal protein L18</fullName>
    </alternativeName>
</protein>
<evidence type="ECO:0000255" key="1">
    <source>
        <dbReference type="HAMAP-Rule" id="MF_01337"/>
    </source>
</evidence>
<evidence type="ECO:0000305" key="2"/>
<feature type="chain" id="PRO_1000053073" description="Large ribosomal subunit protein uL18">
    <location>
        <begin position="1"/>
        <end position="114"/>
    </location>
</feature>
<name>RL18_PARD8</name>
<proteinExistence type="inferred from homology"/>
<comment type="function">
    <text evidence="1">This is one of the proteins that bind and probably mediate the attachment of the 5S RNA into the large ribosomal subunit, where it forms part of the central protuberance.</text>
</comment>
<comment type="subunit">
    <text evidence="1">Part of the 50S ribosomal subunit; part of the 5S rRNA/L5/L18/L25 subcomplex. Contacts the 5S and 23S rRNAs.</text>
</comment>
<comment type="similarity">
    <text evidence="1">Belongs to the universal ribosomal protein uL18 family.</text>
</comment>
<dbReference type="EMBL" id="CP000140">
    <property type="protein sequence ID" value="ABR44089.1"/>
    <property type="molecule type" value="Genomic_DNA"/>
</dbReference>
<dbReference type="RefSeq" id="WP_005853992.1">
    <property type="nucleotide sequence ID" value="NZ_LR215978.1"/>
</dbReference>
<dbReference type="SMR" id="A6LEH5"/>
<dbReference type="STRING" id="435591.BDI_2364"/>
<dbReference type="PaxDb" id="435591-BDI_2364"/>
<dbReference type="GeneID" id="93522357"/>
<dbReference type="KEGG" id="pdi:BDI_2364"/>
<dbReference type="eggNOG" id="COG0256">
    <property type="taxonomic scope" value="Bacteria"/>
</dbReference>
<dbReference type="HOGENOM" id="CLU_098841_0_1_10"/>
<dbReference type="BioCyc" id="PDIS435591:G1G5A-2429-MONOMER"/>
<dbReference type="Proteomes" id="UP000000566">
    <property type="component" value="Chromosome"/>
</dbReference>
<dbReference type="GO" id="GO:0022625">
    <property type="term" value="C:cytosolic large ribosomal subunit"/>
    <property type="evidence" value="ECO:0007669"/>
    <property type="project" value="TreeGrafter"/>
</dbReference>
<dbReference type="GO" id="GO:0008097">
    <property type="term" value="F:5S rRNA binding"/>
    <property type="evidence" value="ECO:0007669"/>
    <property type="project" value="TreeGrafter"/>
</dbReference>
<dbReference type="GO" id="GO:0003735">
    <property type="term" value="F:structural constituent of ribosome"/>
    <property type="evidence" value="ECO:0007669"/>
    <property type="project" value="InterPro"/>
</dbReference>
<dbReference type="GO" id="GO:0006412">
    <property type="term" value="P:translation"/>
    <property type="evidence" value="ECO:0007669"/>
    <property type="project" value="UniProtKB-UniRule"/>
</dbReference>
<dbReference type="CDD" id="cd00432">
    <property type="entry name" value="Ribosomal_L18_L5e"/>
    <property type="match status" value="1"/>
</dbReference>
<dbReference type="FunFam" id="3.30.420.100:FF:000003">
    <property type="entry name" value="50S ribosomal protein L18"/>
    <property type="match status" value="1"/>
</dbReference>
<dbReference type="Gene3D" id="3.30.420.100">
    <property type="match status" value="1"/>
</dbReference>
<dbReference type="HAMAP" id="MF_01337_B">
    <property type="entry name" value="Ribosomal_uL18_B"/>
    <property type="match status" value="1"/>
</dbReference>
<dbReference type="InterPro" id="IPR004389">
    <property type="entry name" value="Ribosomal_uL18_bac-type"/>
</dbReference>
<dbReference type="InterPro" id="IPR005484">
    <property type="entry name" value="Ribosomal_uL18_bac/euk"/>
</dbReference>
<dbReference type="NCBIfam" id="TIGR00060">
    <property type="entry name" value="L18_bact"/>
    <property type="match status" value="1"/>
</dbReference>
<dbReference type="PANTHER" id="PTHR12899">
    <property type="entry name" value="39S RIBOSOMAL PROTEIN L18, MITOCHONDRIAL"/>
    <property type="match status" value="1"/>
</dbReference>
<dbReference type="PANTHER" id="PTHR12899:SF3">
    <property type="entry name" value="LARGE RIBOSOMAL SUBUNIT PROTEIN UL18M"/>
    <property type="match status" value="1"/>
</dbReference>
<dbReference type="Pfam" id="PF00861">
    <property type="entry name" value="Ribosomal_L18p"/>
    <property type="match status" value="1"/>
</dbReference>
<dbReference type="SUPFAM" id="SSF53137">
    <property type="entry name" value="Translational machinery components"/>
    <property type="match status" value="1"/>
</dbReference>
<organism>
    <name type="scientific">Parabacteroides distasonis (strain ATCC 8503 / DSM 20701 / CIP 104284 / JCM 5825 / NCTC 11152)</name>
    <dbReference type="NCBI Taxonomy" id="435591"/>
    <lineage>
        <taxon>Bacteria</taxon>
        <taxon>Pseudomonadati</taxon>
        <taxon>Bacteroidota</taxon>
        <taxon>Bacteroidia</taxon>
        <taxon>Bacteroidales</taxon>
        <taxon>Tannerellaceae</taxon>
        <taxon>Parabacteroides</taxon>
    </lineage>
</organism>
<gene>
    <name evidence="1" type="primary">rplR</name>
    <name type="ordered locus">BDI_2364</name>
</gene>
<accession>A6LEH5</accession>
<sequence>MTTKLERRLKIKAGVRGKISGTTERPRLTVFRSNKQIYAQVIDDTTGKTLAAASSLKLDVKAPKKEIAAKVGELIAKGAQEAGVQTVVFDRNGYLYHGRIKELADAARNGGLKF</sequence>
<reference key="1">
    <citation type="journal article" date="2007" name="PLoS Biol.">
        <title>Evolution of symbiotic bacteria in the distal human intestine.</title>
        <authorList>
            <person name="Xu J."/>
            <person name="Mahowald M.A."/>
            <person name="Ley R.E."/>
            <person name="Lozupone C.A."/>
            <person name="Hamady M."/>
            <person name="Martens E.C."/>
            <person name="Henrissat B."/>
            <person name="Coutinho P.M."/>
            <person name="Minx P."/>
            <person name="Latreille P."/>
            <person name="Cordum H."/>
            <person name="Van Brunt A."/>
            <person name="Kim K."/>
            <person name="Fulton R.S."/>
            <person name="Fulton L.A."/>
            <person name="Clifton S.W."/>
            <person name="Wilson R.K."/>
            <person name="Knight R.D."/>
            <person name="Gordon J.I."/>
        </authorList>
    </citation>
    <scope>NUCLEOTIDE SEQUENCE [LARGE SCALE GENOMIC DNA]</scope>
    <source>
        <strain>ATCC 8503 / DSM 20701 / CIP 104284 / JCM 5825 / NCTC 11152</strain>
    </source>
</reference>
<keyword id="KW-1185">Reference proteome</keyword>
<keyword id="KW-0687">Ribonucleoprotein</keyword>
<keyword id="KW-0689">Ribosomal protein</keyword>
<keyword id="KW-0694">RNA-binding</keyword>
<keyword id="KW-0699">rRNA-binding</keyword>